<keyword id="KW-1185">Reference proteome</keyword>
<keyword id="KW-0687">Ribonucleoprotein</keyword>
<keyword id="KW-0689">Ribosomal protein</keyword>
<keyword id="KW-0694">RNA-binding</keyword>
<keyword id="KW-0699">rRNA-binding</keyword>
<proteinExistence type="inferred from homology"/>
<protein>
    <recommendedName>
        <fullName evidence="1">Small ribosomal subunit protein uS15</fullName>
    </recommendedName>
    <alternativeName>
        <fullName evidence="2">30S ribosomal protein S15</fullName>
    </alternativeName>
</protein>
<accession>A1WLP9</accession>
<name>RS15_VEREI</name>
<dbReference type="EMBL" id="CP000542">
    <property type="protein sequence ID" value="ABM58556.1"/>
    <property type="molecule type" value="Genomic_DNA"/>
</dbReference>
<dbReference type="RefSeq" id="WP_005793232.1">
    <property type="nucleotide sequence ID" value="NC_008786.1"/>
</dbReference>
<dbReference type="SMR" id="A1WLP9"/>
<dbReference type="STRING" id="391735.Veis_2818"/>
<dbReference type="GeneID" id="76461317"/>
<dbReference type="KEGG" id="vei:Veis_2818"/>
<dbReference type="eggNOG" id="COG0184">
    <property type="taxonomic scope" value="Bacteria"/>
</dbReference>
<dbReference type="HOGENOM" id="CLU_148518_0_0_4"/>
<dbReference type="OrthoDB" id="9799262at2"/>
<dbReference type="Proteomes" id="UP000000374">
    <property type="component" value="Chromosome"/>
</dbReference>
<dbReference type="GO" id="GO:0022627">
    <property type="term" value="C:cytosolic small ribosomal subunit"/>
    <property type="evidence" value="ECO:0007669"/>
    <property type="project" value="TreeGrafter"/>
</dbReference>
<dbReference type="GO" id="GO:0019843">
    <property type="term" value="F:rRNA binding"/>
    <property type="evidence" value="ECO:0007669"/>
    <property type="project" value="UniProtKB-UniRule"/>
</dbReference>
<dbReference type="GO" id="GO:0003735">
    <property type="term" value="F:structural constituent of ribosome"/>
    <property type="evidence" value="ECO:0007669"/>
    <property type="project" value="InterPro"/>
</dbReference>
<dbReference type="GO" id="GO:0006412">
    <property type="term" value="P:translation"/>
    <property type="evidence" value="ECO:0007669"/>
    <property type="project" value="UniProtKB-UniRule"/>
</dbReference>
<dbReference type="CDD" id="cd00353">
    <property type="entry name" value="Ribosomal_S15p_S13e"/>
    <property type="match status" value="1"/>
</dbReference>
<dbReference type="FunFam" id="1.10.287.10:FF:000002">
    <property type="entry name" value="30S ribosomal protein S15"/>
    <property type="match status" value="1"/>
</dbReference>
<dbReference type="Gene3D" id="6.10.250.3130">
    <property type="match status" value="1"/>
</dbReference>
<dbReference type="Gene3D" id="1.10.287.10">
    <property type="entry name" value="S15/NS1, RNA-binding"/>
    <property type="match status" value="1"/>
</dbReference>
<dbReference type="HAMAP" id="MF_01343_B">
    <property type="entry name" value="Ribosomal_uS15_B"/>
    <property type="match status" value="1"/>
</dbReference>
<dbReference type="InterPro" id="IPR000589">
    <property type="entry name" value="Ribosomal_uS15"/>
</dbReference>
<dbReference type="InterPro" id="IPR005290">
    <property type="entry name" value="Ribosomal_uS15_bac-type"/>
</dbReference>
<dbReference type="InterPro" id="IPR009068">
    <property type="entry name" value="uS15_NS1_RNA-bd_sf"/>
</dbReference>
<dbReference type="NCBIfam" id="TIGR00952">
    <property type="entry name" value="S15_bact"/>
    <property type="match status" value="1"/>
</dbReference>
<dbReference type="PANTHER" id="PTHR23321">
    <property type="entry name" value="RIBOSOMAL PROTEIN S15, BACTERIAL AND ORGANELLAR"/>
    <property type="match status" value="1"/>
</dbReference>
<dbReference type="PANTHER" id="PTHR23321:SF26">
    <property type="entry name" value="SMALL RIBOSOMAL SUBUNIT PROTEIN US15M"/>
    <property type="match status" value="1"/>
</dbReference>
<dbReference type="Pfam" id="PF00312">
    <property type="entry name" value="Ribosomal_S15"/>
    <property type="match status" value="1"/>
</dbReference>
<dbReference type="SMART" id="SM01387">
    <property type="entry name" value="Ribosomal_S15"/>
    <property type="match status" value="1"/>
</dbReference>
<dbReference type="SUPFAM" id="SSF47060">
    <property type="entry name" value="S15/NS1 RNA-binding domain"/>
    <property type="match status" value="1"/>
</dbReference>
<dbReference type="PROSITE" id="PS00362">
    <property type="entry name" value="RIBOSOMAL_S15"/>
    <property type="match status" value="1"/>
</dbReference>
<reference key="1">
    <citation type="submission" date="2006-12" db="EMBL/GenBank/DDBJ databases">
        <title>Complete sequence of chromosome 1 of Verminephrobacter eiseniae EF01-2.</title>
        <authorList>
            <person name="Copeland A."/>
            <person name="Lucas S."/>
            <person name="Lapidus A."/>
            <person name="Barry K."/>
            <person name="Detter J.C."/>
            <person name="Glavina del Rio T."/>
            <person name="Dalin E."/>
            <person name="Tice H."/>
            <person name="Pitluck S."/>
            <person name="Chertkov O."/>
            <person name="Brettin T."/>
            <person name="Bruce D."/>
            <person name="Han C."/>
            <person name="Tapia R."/>
            <person name="Gilna P."/>
            <person name="Schmutz J."/>
            <person name="Larimer F."/>
            <person name="Land M."/>
            <person name="Hauser L."/>
            <person name="Kyrpides N."/>
            <person name="Kim E."/>
            <person name="Stahl D."/>
            <person name="Richardson P."/>
        </authorList>
    </citation>
    <scope>NUCLEOTIDE SEQUENCE [LARGE SCALE GENOMIC DNA]</scope>
    <source>
        <strain>EF01-2</strain>
    </source>
</reference>
<comment type="function">
    <text evidence="1">One of the primary rRNA binding proteins, it binds directly to 16S rRNA where it helps nucleate assembly of the platform of the 30S subunit by binding and bridging several RNA helices of the 16S rRNA.</text>
</comment>
<comment type="function">
    <text evidence="1">Forms an intersubunit bridge (bridge B4) with the 23S rRNA of the 50S subunit in the ribosome.</text>
</comment>
<comment type="subunit">
    <text evidence="1">Part of the 30S ribosomal subunit. Forms a bridge to the 50S subunit in the 70S ribosome, contacting the 23S rRNA.</text>
</comment>
<comment type="similarity">
    <text evidence="1">Belongs to the universal ribosomal protein uS15 family.</text>
</comment>
<sequence length="88" mass="9845">MIASSIKAEVVKANARAANDTGSPEVQVALLTARINELTPHFKTHAKDHHGRRGLLRMVSRRRKLLDYLKAKDADRYTALIAKLGLRK</sequence>
<feature type="chain" id="PRO_1000054893" description="Small ribosomal subunit protein uS15">
    <location>
        <begin position="1"/>
        <end position="88"/>
    </location>
</feature>
<evidence type="ECO:0000255" key="1">
    <source>
        <dbReference type="HAMAP-Rule" id="MF_01343"/>
    </source>
</evidence>
<evidence type="ECO:0000305" key="2"/>
<organism>
    <name type="scientific">Verminephrobacter eiseniae (strain EF01-2)</name>
    <dbReference type="NCBI Taxonomy" id="391735"/>
    <lineage>
        <taxon>Bacteria</taxon>
        <taxon>Pseudomonadati</taxon>
        <taxon>Pseudomonadota</taxon>
        <taxon>Betaproteobacteria</taxon>
        <taxon>Burkholderiales</taxon>
        <taxon>Comamonadaceae</taxon>
        <taxon>Verminephrobacter</taxon>
    </lineage>
</organism>
<gene>
    <name evidence="1" type="primary">rpsO</name>
    <name type="ordered locus">Veis_2818</name>
</gene>